<protein>
    <recommendedName>
        <fullName>Transcription factor TGA1</fullName>
    </recommendedName>
    <alternativeName>
        <fullName>DNA-binding protein TGA1a-like protein</fullName>
    </alternativeName>
    <alternativeName>
        <fullName>bZIP transcription factor 47</fullName>
        <shortName>AtbZIP47</shortName>
    </alternativeName>
</protein>
<dbReference type="EMBL" id="X68053">
    <property type="protein sequence ID" value="CAA48189.1"/>
    <property type="molecule type" value="mRNA"/>
</dbReference>
<dbReference type="EMBL" id="AB013395">
    <property type="protein sequence ID" value="BAB11657.1"/>
    <property type="molecule type" value="Genomic_DNA"/>
</dbReference>
<dbReference type="EMBL" id="CP002688">
    <property type="protein sequence ID" value="AED98019.1"/>
    <property type="molecule type" value="Genomic_DNA"/>
</dbReference>
<dbReference type="EMBL" id="CP002688">
    <property type="protein sequence ID" value="AED98020.1"/>
    <property type="molecule type" value="Genomic_DNA"/>
</dbReference>
<dbReference type="EMBL" id="CP002688">
    <property type="protein sequence ID" value="AED98021.1"/>
    <property type="molecule type" value="Genomic_DNA"/>
</dbReference>
<dbReference type="EMBL" id="CP002688">
    <property type="protein sequence ID" value="AED98022.1"/>
    <property type="molecule type" value="Genomic_DNA"/>
</dbReference>
<dbReference type="EMBL" id="CP002688">
    <property type="protein sequence ID" value="AED98023.1"/>
    <property type="molecule type" value="Genomic_DNA"/>
</dbReference>
<dbReference type="EMBL" id="CP002688">
    <property type="protein sequence ID" value="ANM70446.1"/>
    <property type="molecule type" value="Genomic_DNA"/>
</dbReference>
<dbReference type="EMBL" id="AY099593">
    <property type="protein sequence ID" value="AAM20444.1"/>
    <property type="molecule type" value="mRNA"/>
</dbReference>
<dbReference type="EMBL" id="AY128838">
    <property type="protein sequence ID" value="AAM91238.1"/>
    <property type="molecule type" value="mRNA"/>
</dbReference>
<dbReference type="EMBL" id="AY087049">
    <property type="protein sequence ID" value="AAM64610.1"/>
    <property type="status" value="ALT_INIT"/>
    <property type="molecule type" value="mRNA"/>
</dbReference>
<dbReference type="PIR" id="JQ1678">
    <property type="entry name" value="JQ1678"/>
</dbReference>
<dbReference type="RefSeq" id="NP_001032147.1">
    <molecule id="Q39237-1"/>
    <property type="nucleotide sequence ID" value="NM_001037070.1"/>
</dbReference>
<dbReference type="RefSeq" id="NP_001032148.1">
    <molecule id="Q39237-1"/>
    <property type="nucleotide sequence ID" value="NM_001037071.1"/>
</dbReference>
<dbReference type="RefSeq" id="NP_001032149.1">
    <molecule id="Q39237-1"/>
    <property type="nucleotide sequence ID" value="NM_001037072.2"/>
</dbReference>
<dbReference type="RefSeq" id="NP_001318881.1">
    <molecule id="Q39237-1"/>
    <property type="nucleotide sequence ID" value="NM_001345675.1"/>
</dbReference>
<dbReference type="RefSeq" id="NP_201324.1">
    <molecule id="Q39237-1"/>
    <property type="nucleotide sequence ID" value="NM_125919.3"/>
</dbReference>
<dbReference type="RefSeq" id="NP_851273.1">
    <molecule id="Q39237-1"/>
    <property type="nucleotide sequence ID" value="NM_180942.3"/>
</dbReference>
<dbReference type="SMR" id="Q39237"/>
<dbReference type="BioGRID" id="21888">
    <property type="interactions" value="161"/>
</dbReference>
<dbReference type="FunCoup" id="Q39237">
    <property type="interactions" value="293"/>
</dbReference>
<dbReference type="IntAct" id="Q39237">
    <property type="interactions" value="131"/>
</dbReference>
<dbReference type="STRING" id="3702.Q39237"/>
<dbReference type="PaxDb" id="3702-AT5G65210.2"/>
<dbReference type="ProteomicsDB" id="234268">
    <molecule id="Q39237-1"/>
</dbReference>
<dbReference type="EnsemblPlants" id="AT5G65210.1">
    <molecule id="Q39237-1"/>
    <property type="protein sequence ID" value="AT5G65210.1"/>
    <property type="gene ID" value="AT5G65210"/>
</dbReference>
<dbReference type="EnsemblPlants" id="AT5G65210.2">
    <molecule id="Q39237-1"/>
    <property type="protein sequence ID" value="AT5G65210.2"/>
    <property type="gene ID" value="AT5G65210"/>
</dbReference>
<dbReference type="EnsemblPlants" id="AT5G65210.3">
    <molecule id="Q39237-1"/>
    <property type="protein sequence ID" value="AT5G65210.3"/>
    <property type="gene ID" value="AT5G65210"/>
</dbReference>
<dbReference type="EnsemblPlants" id="AT5G65210.4">
    <molecule id="Q39237-1"/>
    <property type="protein sequence ID" value="AT5G65210.4"/>
    <property type="gene ID" value="AT5G65210"/>
</dbReference>
<dbReference type="EnsemblPlants" id="AT5G65210.5">
    <molecule id="Q39237-1"/>
    <property type="protein sequence ID" value="AT5G65210.5"/>
    <property type="gene ID" value="AT5G65210"/>
</dbReference>
<dbReference type="EnsemblPlants" id="AT5G65210.7">
    <molecule id="Q39237-1"/>
    <property type="protein sequence ID" value="AT5G65210.7"/>
    <property type="gene ID" value="AT5G65210"/>
</dbReference>
<dbReference type="GeneID" id="836646"/>
<dbReference type="Gramene" id="AT5G65210.1">
    <molecule id="Q39237-1"/>
    <property type="protein sequence ID" value="AT5G65210.1"/>
    <property type="gene ID" value="AT5G65210"/>
</dbReference>
<dbReference type="Gramene" id="AT5G65210.2">
    <molecule id="Q39237-1"/>
    <property type="protein sequence ID" value="AT5G65210.2"/>
    <property type="gene ID" value="AT5G65210"/>
</dbReference>
<dbReference type="Gramene" id="AT5G65210.3">
    <molecule id="Q39237-1"/>
    <property type="protein sequence ID" value="AT5G65210.3"/>
    <property type="gene ID" value="AT5G65210"/>
</dbReference>
<dbReference type="Gramene" id="AT5G65210.4">
    <molecule id="Q39237-1"/>
    <property type="protein sequence ID" value="AT5G65210.4"/>
    <property type="gene ID" value="AT5G65210"/>
</dbReference>
<dbReference type="Gramene" id="AT5G65210.5">
    <molecule id="Q39237-1"/>
    <property type="protein sequence ID" value="AT5G65210.5"/>
    <property type="gene ID" value="AT5G65210"/>
</dbReference>
<dbReference type="Gramene" id="AT5G65210.7">
    <molecule id="Q39237-1"/>
    <property type="protein sequence ID" value="AT5G65210.7"/>
    <property type="gene ID" value="AT5G65210"/>
</dbReference>
<dbReference type="KEGG" id="ath:AT5G65210"/>
<dbReference type="Araport" id="AT5G65210"/>
<dbReference type="TAIR" id="AT5G65210">
    <property type="gene designation" value="TGA1"/>
</dbReference>
<dbReference type="eggNOG" id="ENOG502QS1H">
    <property type="taxonomic scope" value="Eukaryota"/>
</dbReference>
<dbReference type="InParanoid" id="Q39237"/>
<dbReference type="PhylomeDB" id="Q39237"/>
<dbReference type="PRO" id="PR:Q39237"/>
<dbReference type="Proteomes" id="UP000006548">
    <property type="component" value="Chromosome 5"/>
</dbReference>
<dbReference type="ExpressionAtlas" id="Q39237">
    <property type="expression patterns" value="baseline and differential"/>
</dbReference>
<dbReference type="GO" id="GO:0005634">
    <property type="term" value="C:nucleus"/>
    <property type="evidence" value="ECO:0007669"/>
    <property type="project" value="UniProtKB-SubCell"/>
</dbReference>
<dbReference type="GO" id="GO:0003700">
    <property type="term" value="F:DNA-binding transcription factor activity"/>
    <property type="evidence" value="ECO:0000250"/>
    <property type="project" value="TAIR"/>
</dbReference>
<dbReference type="GO" id="GO:0043565">
    <property type="term" value="F:sequence-specific DNA binding"/>
    <property type="evidence" value="ECO:0000314"/>
    <property type="project" value="TAIR"/>
</dbReference>
<dbReference type="GO" id="GO:0000976">
    <property type="term" value="F:transcription cis-regulatory region binding"/>
    <property type="evidence" value="ECO:0000353"/>
    <property type="project" value="TAIR"/>
</dbReference>
<dbReference type="GO" id="GO:0042742">
    <property type="term" value="P:defense response to bacterium"/>
    <property type="evidence" value="ECO:0000315"/>
    <property type="project" value="TAIR"/>
</dbReference>
<dbReference type="GO" id="GO:0006351">
    <property type="term" value="P:DNA-templated transcription"/>
    <property type="evidence" value="ECO:0007669"/>
    <property type="project" value="InterPro"/>
</dbReference>
<dbReference type="CDD" id="cd14708">
    <property type="entry name" value="bZIP_HBP1b-like"/>
    <property type="match status" value="1"/>
</dbReference>
<dbReference type="FunFam" id="1.20.5.170:FF:000019">
    <property type="entry name" value="BZIP family transcription factor"/>
    <property type="match status" value="1"/>
</dbReference>
<dbReference type="Gene3D" id="1.20.5.170">
    <property type="match status" value="1"/>
</dbReference>
<dbReference type="InterPro" id="IPR004827">
    <property type="entry name" value="bZIP"/>
</dbReference>
<dbReference type="InterPro" id="IPR046347">
    <property type="entry name" value="bZIP_sf"/>
</dbReference>
<dbReference type="InterPro" id="IPR025422">
    <property type="entry name" value="TGA_domain"/>
</dbReference>
<dbReference type="PANTHER" id="PTHR45693:SF64">
    <property type="entry name" value="TRANSCRIPTION FACTOR TGA1"/>
    <property type="match status" value="1"/>
</dbReference>
<dbReference type="PANTHER" id="PTHR45693">
    <property type="entry name" value="TRANSCRIPTION FACTOR TGA9"/>
    <property type="match status" value="1"/>
</dbReference>
<dbReference type="Pfam" id="PF00170">
    <property type="entry name" value="bZIP_1"/>
    <property type="match status" value="1"/>
</dbReference>
<dbReference type="Pfam" id="PF14144">
    <property type="entry name" value="DOG1"/>
    <property type="match status" value="1"/>
</dbReference>
<dbReference type="SMART" id="SM00338">
    <property type="entry name" value="BRLZ"/>
    <property type="match status" value="1"/>
</dbReference>
<dbReference type="SUPFAM" id="SSF57959">
    <property type="entry name" value="Leucine zipper domain"/>
    <property type="match status" value="1"/>
</dbReference>
<dbReference type="PROSITE" id="PS50217">
    <property type="entry name" value="BZIP"/>
    <property type="match status" value="1"/>
</dbReference>
<dbReference type="PROSITE" id="PS00036">
    <property type="entry name" value="BZIP_BASIC"/>
    <property type="match status" value="1"/>
</dbReference>
<dbReference type="PROSITE" id="PS51806">
    <property type="entry name" value="DOG1"/>
    <property type="match status" value="1"/>
</dbReference>
<comment type="function">
    <text>Transcriptional activator that binds specifically to the DNA sequence 5'-TGACG-3'. Recognizes ocs elements like the as-1 motif of the cauliflower mosaic virus 35S promoter. Binding to the as-1-like cis elements mediate auxin- and salicylic acid-inducible transcription. May be involved in the induction of the systemic acquired resistance (SAR) via its interaction with NPR1. Could also bind to the Hex-motif (5'-TGACGTGG-3') another cis-acting element found in plant histone promoters.</text>
</comment>
<comment type="subunit">
    <text evidence="5">Binds DNA as a dimer. The reduced form interacts with NPR1.</text>
</comment>
<comment type="interaction">
    <interactant intactId="EBI-541351">
        <id>Q39237</id>
    </interactant>
    <interactant intactId="EBI-4424461">
        <id>Q8GYE4</id>
        <label>At2g38300</label>
    </interactant>
    <organismsDiffer>false</organismsDiffer>
    <experiments>3</experiments>
</comment>
<comment type="interaction">
    <interactant intactId="EBI-541351">
        <id>Q39237</id>
    </interactant>
    <interactant intactId="EBI-4444060">
        <id>O82255</id>
        <label>GRXC13</label>
    </interactant>
    <organismsDiffer>false</organismsDiffer>
    <experiments>3</experiments>
</comment>
<comment type="interaction">
    <interactant intactId="EBI-541351">
        <id>Q39237</id>
    </interactant>
    <interactant intactId="EBI-2257898">
        <id>Q96305</id>
        <label>GRXC7</label>
    </interactant>
    <organismsDiffer>false</organismsDiffer>
    <experiments>4</experiments>
</comment>
<comment type="interaction">
    <interactant intactId="EBI-541351">
        <id>Q39237</id>
    </interactant>
    <interactant intactId="EBI-4434651">
        <id>Q8LF89</id>
        <label>GRXC8</label>
    </interactant>
    <organismsDiffer>false</organismsDiffer>
    <experiments>3</experiments>
</comment>
<comment type="interaction">
    <interactant intactId="EBI-541351">
        <id>Q39237</id>
    </interactant>
    <interactant intactId="EBI-25521272">
        <id>Q6NLU2</id>
        <label>GRXS7</label>
    </interactant>
    <organismsDiffer>false</organismsDiffer>
    <experiments>3</experiments>
</comment>
<comment type="interaction">
    <interactant intactId="EBI-541351">
        <id>Q39237</id>
    </interactant>
    <interactant intactId="EBI-4450582">
        <id>O04341</id>
        <label>GRXS9</label>
    </interactant>
    <organismsDiffer>false</organismsDiffer>
    <experiments>3</experiments>
</comment>
<comment type="interaction">
    <interactant intactId="EBI-541351">
        <id>Q39237</id>
    </interactant>
    <interactant intactId="EBI-15209584">
        <id>Q9STS6</id>
        <label>LBD27</label>
    </interactant>
    <organismsDiffer>false</organismsDiffer>
    <experiments>3</experiments>
</comment>
<comment type="interaction">
    <interactant intactId="EBI-541351">
        <id>Q39237</id>
    </interactant>
    <interactant intactId="EBI-1392127">
        <id>P93002</id>
        <label>NPR1</label>
    </interactant>
    <organismsDiffer>false</organismsDiffer>
    <experiments>7</experiments>
</comment>
<comment type="interaction">
    <interactant intactId="EBI-541351">
        <id>Q39237</id>
    </interactant>
    <interactant intactId="EBI-4441365">
        <id>Q8L746</id>
        <label>NPR3</label>
    </interactant>
    <organismsDiffer>false</organismsDiffer>
    <experiments>3</experiments>
</comment>
<comment type="subcellular location">
    <subcellularLocation>
        <location>Nucleus</location>
    </subcellularLocation>
</comment>
<comment type="alternative products">
    <event type="alternative splicing"/>
    <isoform>
        <id>Q39237-1</id>
        <name>1</name>
        <sequence type="displayed"/>
    </isoform>
    <text>A number of isoforms are produced. According to EST sequences.</text>
</comment>
<comment type="tissue specificity">
    <text evidence="6">Predominantly expressed in roots.</text>
</comment>
<comment type="similarity">
    <text evidence="7">Belongs to the bZIP family.</text>
</comment>
<comment type="sequence caution" evidence="7">
    <conflict type="erroneous initiation">
        <sequence resource="EMBL-CDS" id="AAM64610"/>
    </conflict>
</comment>
<feature type="chain" id="PRO_0000076553" description="Transcription factor TGA1">
    <location>
        <begin position="1"/>
        <end position="368"/>
    </location>
</feature>
<feature type="domain" description="bZIP" evidence="2">
    <location>
        <begin position="82"/>
        <end position="145"/>
    </location>
</feature>
<feature type="domain" description="DOG1" evidence="3">
    <location>
        <begin position="153"/>
        <end position="363"/>
    </location>
</feature>
<feature type="region of interest" description="Disordered" evidence="4">
    <location>
        <begin position="53"/>
        <end position="83"/>
    </location>
</feature>
<feature type="region of interest" description="Basic motif" evidence="2">
    <location>
        <begin position="84"/>
        <end position="104"/>
    </location>
</feature>
<feature type="region of interest" description="Leucine-zipper" evidence="2">
    <location>
        <begin position="110"/>
        <end position="124"/>
    </location>
</feature>
<feature type="coiled-coil region" evidence="1">
    <location>
        <begin position="83"/>
        <end position="131"/>
    </location>
</feature>
<feature type="coiled-coil region" evidence="1">
    <location>
        <begin position="261"/>
        <end position="281"/>
    </location>
</feature>
<feature type="compositionally biased region" description="Polar residues" evidence="4">
    <location>
        <begin position="53"/>
        <end position="65"/>
    </location>
</feature>
<feature type="disulfide bond" evidence="1">
    <location>
        <begin position="260"/>
        <end position="266"/>
    </location>
</feature>
<feature type="mutagenesis site" description="Gain of interaction with NPR1; when associated with S-266." evidence="5">
    <original>C</original>
    <variation>N</variation>
    <location>
        <position position="260"/>
    </location>
</feature>
<feature type="mutagenesis site" description="Gain of interaction with NPR1; when associated with N-260." evidence="5">
    <original>C</original>
    <variation>S</variation>
    <location>
        <position position="266"/>
    </location>
</feature>
<feature type="sequence conflict" description="In Ref. 1; CAA48189." evidence="7" ref="1">
    <original>ADC</original>
    <variation>RT</variation>
    <location>
        <begin position="285"/>
        <end position="287"/>
    </location>
</feature>
<name>TGA1_ARATH</name>
<evidence type="ECO:0000255" key="1"/>
<evidence type="ECO:0000255" key="2">
    <source>
        <dbReference type="PROSITE-ProRule" id="PRU00978"/>
    </source>
</evidence>
<evidence type="ECO:0000255" key="3">
    <source>
        <dbReference type="PROSITE-ProRule" id="PRU01147"/>
    </source>
</evidence>
<evidence type="ECO:0000256" key="4">
    <source>
        <dbReference type="SAM" id="MobiDB-lite"/>
    </source>
</evidence>
<evidence type="ECO:0000269" key="5">
    <source>
    </source>
</evidence>
<evidence type="ECO:0000269" key="6">
    <source>
    </source>
</evidence>
<evidence type="ECO:0000305" key="7"/>
<accession>Q39237</accession>
<accession>Q8LBQ9</accession>
<accession>Q9FJP4</accession>
<keyword id="KW-0010">Activator</keyword>
<keyword id="KW-0025">Alternative splicing</keyword>
<keyword id="KW-0175">Coiled coil</keyword>
<keyword id="KW-1015">Disulfide bond</keyword>
<keyword id="KW-0238">DNA-binding</keyword>
<keyword id="KW-0539">Nucleus</keyword>
<keyword id="KW-1185">Reference proteome</keyword>
<keyword id="KW-0804">Transcription</keyword>
<keyword id="KW-0805">Transcription regulation</keyword>
<sequence>MNSTSTHFVPPRRVGIYEPVHQFGMWGESFKSNISNGTMNTPNHIIIPNNQKLDNNVSEDTSHGTAGTPHMFDQEASTSRHPDKIQRRLAQNREAARKSRLRKKAYVQQLETSRLKLIQLEQELDRARQQGFYVGNGIDTNSLGFSETMNPGIAAFEMEYGHWVEEQNRQICELRTVLHGHINDIELRSLVENAMKHYFELFRMKSSAAKADVFFVMSGMWRTSAERFFLWIGGFRPSDLLKVLLPHFDVLTDQQLLDVCNLKQSCQQAEDALTQGMEKLQHTLADCVAAGQLGEGSYIPQVNSAMDRLEALVSFVNQADHLRHETLQQMYRILTTRQAARGLLALGEYFQRLRALSSSWATRHREPT</sequence>
<reference key="1">
    <citation type="journal article" date="1992" name="Plant Cell">
        <title>TGA1 and G-box binding factors: two distinct classes of Arabidopsis leucine zipper proteins compete for the G-box-like element TGACGTGG.</title>
        <authorList>
            <person name="Schindler U."/>
            <person name="Beckmann H."/>
            <person name="Cashmore A.R."/>
        </authorList>
    </citation>
    <scope>NUCLEOTIDE SEQUENCE [MRNA]</scope>
    <source>
        <strain>cv. Columbia</strain>
        <tissue>Leaf</tissue>
        <tissue>Stem</tissue>
    </source>
</reference>
<reference key="2">
    <citation type="journal article" date="1998" name="DNA Res.">
        <title>Structural analysis of Arabidopsis thaliana chromosome 5. VI. Sequence features of the regions of 1,367,185 bp covered by 19 physically assigned P1 and TAC clones.</title>
        <authorList>
            <person name="Kotani H."/>
            <person name="Nakamura Y."/>
            <person name="Sato S."/>
            <person name="Asamizu E."/>
            <person name="Kaneko T."/>
            <person name="Miyajima N."/>
            <person name="Tabata S."/>
        </authorList>
    </citation>
    <scope>NUCLEOTIDE SEQUENCE [LARGE SCALE GENOMIC DNA]</scope>
    <source>
        <strain>cv. Columbia</strain>
    </source>
</reference>
<reference key="3">
    <citation type="journal article" date="2017" name="Plant J.">
        <title>Araport11: a complete reannotation of the Arabidopsis thaliana reference genome.</title>
        <authorList>
            <person name="Cheng C.Y."/>
            <person name="Krishnakumar V."/>
            <person name="Chan A.P."/>
            <person name="Thibaud-Nissen F."/>
            <person name="Schobel S."/>
            <person name="Town C.D."/>
        </authorList>
    </citation>
    <scope>GENOME REANNOTATION</scope>
    <source>
        <strain>cv. Columbia</strain>
    </source>
</reference>
<reference key="4">
    <citation type="journal article" date="2003" name="Science">
        <title>Empirical analysis of transcriptional activity in the Arabidopsis genome.</title>
        <authorList>
            <person name="Yamada K."/>
            <person name="Lim J."/>
            <person name="Dale J.M."/>
            <person name="Chen H."/>
            <person name="Shinn P."/>
            <person name="Palm C.J."/>
            <person name="Southwick A.M."/>
            <person name="Wu H.C."/>
            <person name="Kim C.J."/>
            <person name="Nguyen M."/>
            <person name="Pham P.K."/>
            <person name="Cheuk R.F."/>
            <person name="Karlin-Newmann G."/>
            <person name="Liu S.X."/>
            <person name="Lam B."/>
            <person name="Sakano H."/>
            <person name="Wu T."/>
            <person name="Yu G."/>
            <person name="Miranda M."/>
            <person name="Quach H.L."/>
            <person name="Tripp M."/>
            <person name="Chang C.H."/>
            <person name="Lee J.M."/>
            <person name="Toriumi M.J."/>
            <person name="Chan M.M."/>
            <person name="Tang C.C."/>
            <person name="Onodera C.S."/>
            <person name="Deng J.M."/>
            <person name="Akiyama K."/>
            <person name="Ansari Y."/>
            <person name="Arakawa T."/>
            <person name="Banh J."/>
            <person name="Banno F."/>
            <person name="Bowser L."/>
            <person name="Brooks S.Y."/>
            <person name="Carninci P."/>
            <person name="Chao Q."/>
            <person name="Choy N."/>
            <person name="Enju A."/>
            <person name="Goldsmith A.D."/>
            <person name="Gurjal M."/>
            <person name="Hansen N.F."/>
            <person name="Hayashizaki Y."/>
            <person name="Johnson-Hopson C."/>
            <person name="Hsuan V.W."/>
            <person name="Iida K."/>
            <person name="Karnes M."/>
            <person name="Khan S."/>
            <person name="Koesema E."/>
            <person name="Ishida J."/>
            <person name="Jiang P.X."/>
            <person name="Jones T."/>
            <person name="Kawai J."/>
            <person name="Kamiya A."/>
            <person name="Meyers C."/>
            <person name="Nakajima M."/>
            <person name="Narusaka M."/>
            <person name="Seki M."/>
            <person name="Sakurai T."/>
            <person name="Satou M."/>
            <person name="Tamse R."/>
            <person name="Vaysberg M."/>
            <person name="Wallender E.K."/>
            <person name="Wong C."/>
            <person name="Yamamura Y."/>
            <person name="Yuan S."/>
            <person name="Shinozaki K."/>
            <person name="Davis R.W."/>
            <person name="Theologis A."/>
            <person name="Ecker J.R."/>
        </authorList>
    </citation>
    <scope>NUCLEOTIDE SEQUENCE [LARGE SCALE MRNA]</scope>
    <source>
        <strain>cv. Columbia</strain>
    </source>
</reference>
<reference key="5">
    <citation type="submission" date="2002-03" db="EMBL/GenBank/DDBJ databases">
        <title>Full-length cDNA from Arabidopsis thaliana.</title>
        <authorList>
            <person name="Brover V.V."/>
            <person name="Troukhan M.E."/>
            <person name="Alexandrov N.A."/>
            <person name="Lu Y.-P."/>
            <person name="Flavell R.B."/>
            <person name="Feldmann K.A."/>
        </authorList>
    </citation>
    <scope>NUCLEOTIDE SEQUENCE [LARGE SCALE MRNA]</scope>
</reference>
<reference key="6">
    <citation type="journal article" date="1995" name="Nucleic Acids Res.">
        <title>Binding site requirements and differential representation of TGF factors in nuclear ASF-1 activity.</title>
        <authorList>
            <person name="Lam E."/>
            <person name="Lam Y.K."/>
        </authorList>
    </citation>
    <scope>DNA-BINDING</scope>
</reference>
<reference key="7">
    <citation type="journal article" date="1996" name="Mol. Gen. Genet.">
        <title>Binding specificity and tissue-specific expression pattern of the Arabidopsis bZIP transcription factor TGA2.</title>
        <authorList>
            <person name="de Pater S."/>
            <person name="Pham K."/>
            <person name="Memelink J."/>
            <person name="Kijne J."/>
        </authorList>
    </citation>
    <scope>TISSUE SPECIFICITY</scope>
</reference>
<reference key="8">
    <citation type="journal article" date="2002" name="Trends Plant Sci.">
        <title>bZIP transcription factors in Arabidopsis.</title>
        <authorList>
            <person name="Jakoby M."/>
            <person name="Weisshaar B."/>
            <person name="Droege-Laser W."/>
            <person name="Vicente-Carbajosa J."/>
            <person name="Tiedemann J."/>
            <person name="Kroj T."/>
            <person name="Parcy F."/>
        </authorList>
    </citation>
    <scope>GENE FAMILY</scope>
    <scope>NOMENCLATURE</scope>
</reference>
<reference key="9">
    <citation type="journal article" date="2003" name="Plant Cell">
        <title>The Arabidopsis NPR1 disease resistance protein is a novel cofactor that confers redox regulation of DNA binding activity to the basic domain/leucine zipper transcription factor TGA1.</title>
        <authorList>
            <person name="Despres C."/>
            <person name="Chubak C."/>
            <person name="Rochon A."/>
            <person name="Clark R."/>
            <person name="Bethune T."/>
            <person name="Desveaux D."/>
            <person name="Fobert P.R."/>
        </authorList>
    </citation>
    <scope>INTERACTION WITH NPR1</scope>
    <scope>MUTAGENESIS OF CYS-260 AND CYS-266</scope>
</reference>
<proteinExistence type="evidence at protein level"/>
<gene>
    <name type="primary">TGA1</name>
    <name type="synonym">BZIP47</name>
    <name type="ordered locus">At5g65210</name>
    <name type="ORF">MQN23.15</name>
</gene>
<organism>
    <name type="scientific">Arabidopsis thaliana</name>
    <name type="common">Mouse-ear cress</name>
    <dbReference type="NCBI Taxonomy" id="3702"/>
    <lineage>
        <taxon>Eukaryota</taxon>
        <taxon>Viridiplantae</taxon>
        <taxon>Streptophyta</taxon>
        <taxon>Embryophyta</taxon>
        <taxon>Tracheophyta</taxon>
        <taxon>Spermatophyta</taxon>
        <taxon>Magnoliopsida</taxon>
        <taxon>eudicotyledons</taxon>
        <taxon>Gunneridae</taxon>
        <taxon>Pentapetalae</taxon>
        <taxon>rosids</taxon>
        <taxon>malvids</taxon>
        <taxon>Brassicales</taxon>
        <taxon>Brassicaceae</taxon>
        <taxon>Camelineae</taxon>
        <taxon>Arabidopsis</taxon>
    </lineage>
</organism>